<accession>Q92Q49</accession>
<comment type="cofactor">
    <cofactor evidence="4">
        <name>Zn(2+)</name>
        <dbReference type="ChEBI" id="CHEBI:29105"/>
    </cofactor>
</comment>
<comment type="subcellular location">
    <subcellularLocation>
        <location evidence="1">Cell inner membrane</location>
        <topology evidence="1">Multi-pass membrane protein</topology>
    </subcellularLocation>
</comment>
<comment type="similarity">
    <text evidence="4">Belongs to the peptidase M50B family.</text>
</comment>
<name>Y1501_RHIME</name>
<protein>
    <recommendedName>
        <fullName>Putative zinc metalloprotease R01501</fullName>
        <ecNumber>3.4.24.-</ecNumber>
    </recommendedName>
</protein>
<keyword id="KW-0997">Cell inner membrane</keyword>
<keyword id="KW-1003">Cell membrane</keyword>
<keyword id="KW-0378">Hydrolase</keyword>
<keyword id="KW-0472">Membrane</keyword>
<keyword id="KW-0479">Metal-binding</keyword>
<keyword id="KW-0482">Metalloprotease</keyword>
<keyword id="KW-0645">Protease</keyword>
<keyword id="KW-1185">Reference proteome</keyword>
<keyword id="KW-0812">Transmembrane</keyword>
<keyword id="KW-1133">Transmembrane helix</keyword>
<keyword id="KW-0862">Zinc</keyword>
<dbReference type="EC" id="3.4.24.-"/>
<dbReference type="EMBL" id="AL591688">
    <property type="protein sequence ID" value="CAC46080.1"/>
    <property type="molecule type" value="Genomic_DNA"/>
</dbReference>
<dbReference type="RefSeq" id="NP_385607.1">
    <property type="nucleotide sequence ID" value="NC_003047.1"/>
</dbReference>
<dbReference type="SMR" id="Q92Q49"/>
<dbReference type="EnsemblBacteria" id="CAC46080">
    <property type="protein sequence ID" value="CAC46080"/>
    <property type="gene ID" value="SMc02095"/>
</dbReference>
<dbReference type="KEGG" id="sme:SMc02095"/>
<dbReference type="PATRIC" id="fig|266834.11.peg.2921"/>
<dbReference type="eggNOG" id="COG0750">
    <property type="taxonomic scope" value="Bacteria"/>
</dbReference>
<dbReference type="HOGENOM" id="CLU_025778_1_0_5"/>
<dbReference type="OrthoDB" id="9782003at2"/>
<dbReference type="Proteomes" id="UP000001976">
    <property type="component" value="Chromosome"/>
</dbReference>
<dbReference type="GO" id="GO:0005886">
    <property type="term" value="C:plasma membrane"/>
    <property type="evidence" value="ECO:0007669"/>
    <property type="project" value="UniProtKB-SubCell"/>
</dbReference>
<dbReference type="GO" id="GO:0046872">
    <property type="term" value="F:metal ion binding"/>
    <property type="evidence" value="ECO:0007669"/>
    <property type="project" value="UniProtKB-KW"/>
</dbReference>
<dbReference type="GO" id="GO:0004222">
    <property type="term" value="F:metalloendopeptidase activity"/>
    <property type="evidence" value="ECO:0007669"/>
    <property type="project" value="InterPro"/>
</dbReference>
<dbReference type="GO" id="GO:0006508">
    <property type="term" value="P:proteolysis"/>
    <property type="evidence" value="ECO:0007669"/>
    <property type="project" value="UniProtKB-KW"/>
</dbReference>
<dbReference type="CDD" id="cd23081">
    <property type="entry name" value="cpPDZ_EcRseP-like"/>
    <property type="match status" value="1"/>
</dbReference>
<dbReference type="CDD" id="cd06163">
    <property type="entry name" value="S2P-M50_PDZ_RseP-like"/>
    <property type="match status" value="1"/>
</dbReference>
<dbReference type="Gene3D" id="2.30.42.10">
    <property type="match status" value="1"/>
</dbReference>
<dbReference type="InterPro" id="IPR001478">
    <property type="entry name" value="PDZ"/>
</dbReference>
<dbReference type="InterPro" id="IPR041489">
    <property type="entry name" value="PDZ_6"/>
</dbReference>
<dbReference type="InterPro" id="IPR036034">
    <property type="entry name" value="PDZ_sf"/>
</dbReference>
<dbReference type="InterPro" id="IPR004387">
    <property type="entry name" value="Pept_M50_Zn"/>
</dbReference>
<dbReference type="InterPro" id="IPR008915">
    <property type="entry name" value="Peptidase_M50"/>
</dbReference>
<dbReference type="NCBIfam" id="TIGR00054">
    <property type="entry name" value="RIP metalloprotease RseP"/>
    <property type="match status" value="1"/>
</dbReference>
<dbReference type="PANTHER" id="PTHR42837:SF2">
    <property type="entry name" value="MEMBRANE METALLOPROTEASE ARASP2, CHLOROPLASTIC-RELATED"/>
    <property type="match status" value="1"/>
</dbReference>
<dbReference type="PANTHER" id="PTHR42837">
    <property type="entry name" value="REGULATOR OF SIGMA-E PROTEASE RSEP"/>
    <property type="match status" value="1"/>
</dbReference>
<dbReference type="Pfam" id="PF17820">
    <property type="entry name" value="PDZ_6"/>
    <property type="match status" value="1"/>
</dbReference>
<dbReference type="Pfam" id="PF02163">
    <property type="entry name" value="Peptidase_M50"/>
    <property type="match status" value="1"/>
</dbReference>
<dbReference type="SMART" id="SM00228">
    <property type="entry name" value="PDZ"/>
    <property type="match status" value="1"/>
</dbReference>
<dbReference type="SUPFAM" id="SSF50156">
    <property type="entry name" value="PDZ domain-like"/>
    <property type="match status" value="1"/>
</dbReference>
<dbReference type="PROSITE" id="PS00142">
    <property type="entry name" value="ZINC_PROTEASE"/>
    <property type="match status" value="1"/>
</dbReference>
<proteinExistence type="inferred from homology"/>
<feature type="chain" id="PRO_0000088456" description="Putative zinc metalloprotease R01501">
    <location>
        <begin position="1"/>
        <end position="374"/>
    </location>
</feature>
<feature type="transmembrane region" description="Helical" evidence="2">
    <location>
        <begin position="36"/>
        <end position="55"/>
    </location>
</feature>
<feature type="transmembrane region" description="Helical" evidence="2">
    <location>
        <begin position="112"/>
        <end position="134"/>
    </location>
</feature>
<feature type="transmembrane region" description="Helical" evidence="2">
    <location>
        <begin position="301"/>
        <end position="323"/>
    </location>
</feature>
<feature type="transmembrane region" description="Helical" evidence="2">
    <location>
        <begin position="348"/>
        <end position="367"/>
    </location>
</feature>
<feature type="domain" description="PDZ">
    <location>
        <begin position="126"/>
        <end position="199"/>
    </location>
</feature>
<feature type="active site" evidence="3">
    <location>
        <position position="27"/>
    </location>
</feature>
<feature type="binding site" evidence="3">
    <location>
        <position position="26"/>
    </location>
    <ligand>
        <name>Zn(2+)</name>
        <dbReference type="ChEBI" id="CHEBI:29105"/>
        <note>catalytic</note>
    </ligand>
</feature>
<feature type="binding site" evidence="3">
    <location>
        <position position="30"/>
    </location>
    <ligand>
        <name>Zn(2+)</name>
        <dbReference type="ChEBI" id="CHEBI:29105"/>
        <note>catalytic</note>
    </ligand>
</feature>
<gene>
    <name type="ordered locus">R01501</name>
    <name type="ORF">SMc02095</name>
</gene>
<reference key="1">
    <citation type="journal article" date="2001" name="Proc. Natl. Acad. Sci. U.S.A.">
        <title>Analysis of the chromosome sequence of the legume symbiont Sinorhizobium meliloti strain 1021.</title>
        <authorList>
            <person name="Capela D."/>
            <person name="Barloy-Hubler F."/>
            <person name="Gouzy J."/>
            <person name="Bothe G."/>
            <person name="Ampe F."/>
            <person name="Batut J."/>
            <person name="Boistard P."/>
            <person name="Becker A."/>
            <person name="Boutry M."/>
            <person name="Cadieu E."/>
            <person name="Dreano S."/>
            <person name="Gloux S."/>
            <person name="Godrie T."/>
            <person name="Goffeau A."/>
            <person name="Kahn D."/>
            <person name="Kiss E."/>
            <person name="Lelaure V."/>
            <person name="Masuy D."/>
            <person name="Pohl T."/>
            <person name="Portetelle D."/>
            <person name="Puehler A."/>
            <person name="Purnelle B."/>
            <person name="Ramsperger U."/>
            <person name="Renard C."/>
            <person name="Thebault P."/>
            <person name="Vandenbol M."/>
            <person name="Weidner S."/>
            <person name="Galibert F."/>
        </authorList>
    </citation>
    <scope>NUCLEOTIDE SEQUENCE [LARGE SCALE GENOMIC DNA]</scope>
    <source>
        <strain>1021</strain>
    </source>
</reference>
<reference key="2">
    <citation type="journal article" date="2001" name="Science">
        <title>The composite genome of the legume symbiont Sinorhizobium meliloti.</title>
        <authorList>
            <person name="Galibert F."/>
            <person name="Finan T.M."/>
            <person name="Long S.R."/>
            <person name="Puehler A."/>
            <person name="Abola P."/>
            <person name="Ampe F."/>
            <person name="Barloy-Hubler F."/>
            <person name="Barnett M.J."/>
            <person name="Becker A."/>
            <person name="Boistard P."/>
            <person name="Bothe G."/>
            <person name="Boutry M."/>
            <person name="Bowser L."/>
            <person name="Buhrmester J."/>
            <person name="Cadieu E."/>
            <person name="Capela D."/>
            <person name="Chain P."/>
            <person name="Cowie A."/>
            <person name="Davis R.W."/>
            <person name="Dreano S."/>
            <person name="Federspiel N.A."/>
            <person name="Fisher R.F."/>
            <person name="Gloux S."/>
            <person name="Godrie T."/>
            <person name="Goffeau A."/>
            <person name="Golding B."/>
            <person name="Gouzy J."/>
            <person name="Gurjal M."/>
            <person name="Hernandez-Lucas I."/>
            <person name="Hong A."/>
            <person name="Huizar L."/>
            <person name="Hyman R.W."/>
            <person name="Jones T."/>
            <person name="Kahn D."/>
            <person name="Kahn M.L."/>
            <person name="Kalman S."/>
            <person name="Keating D.H."/>
            <person name="Kiss E."/>
            <person name="Komp C."/>
            <person name="Lelaure V."/>
            <person name="Masuy D."/>
            <person name="Palm C."/>
            <person name="Peck M.C."/>
            <person name="Pohl T.M."/>
            <person name="Portetelle D."/>
            <person name="Purnelle B."/>
            <person name="Ramsperger U."/>
            <person name="Surzycki R."/>
            <person name="Thebault P."/>
            <person name="Vandenbol M."/>
            <person name="Vorhoelter F.J."/>
            <person name="Weidner S."/>
            <person name="Wells D.H."/>
            <person name="Wong K."/>
            <person name="Yeh K.-C."/>
            <person name="Batut J."/>
        </authorList>
    </citation>
    <scope>NUCLEOTIDE SEQUENCE [LARGE SCALE GENOMIC DNA]</scope>
    <source>
        <strain>1021</strain>
    </source>
</reference>
<organism>
    <name type="scientific">Rhizobium meliloti (strain 1021)</name>
    <name type="common">Ensifer meliloti</name>
    <name type="synonym">Sinorhizobium meliloti</name>
    <dbReference type="NCBI Taxonomy" id="266834"/>
    <lineage>
        <taxon>Bacteria</taxon>
        <taxon>Pseudomonadati</taxon>
        <taxon>Pseudomonadota</taxon>
        <taxon>Alphaproteobacteria</taxon>
        <taxon>Hyphomicrobiales</taxon>
        <taxon>Rhizobiaceae</taxon>
        <taxon>Sinorhizobium/Ensifer group</taxon>
        <taxon>Sinorhizobium</taxon>
    </lineage>
</organism>
<sequence>MSLLLDNLQYTIPTFLFLLTLLVFVHEMGHYLVGRWSGIRILAFSVGFGPELFGWTDRHGTRWKFCAVPLGGYVKFFGDEDAASTPDYRRLETIAPEERGRTFLGAKLWKRAATVAAGPIANFLLAIAIFAVLFSIYGRAVADPVVAFVAPDSAAEKAGVLPGDRLLSIDGKPIATFDDVRRYVSVRPELPITVRIEREGAAIDLPMVPQRTESVDPLGNKMEEGKIGIGTNQEAGNFRVETYGPLEAVGQGALQSWRIVTGTLDYLSNLFVGRMSADQVGGPIRIAQMSGQMAKLGIAEVLNFAAVLSVSIGLLNLMPVPVLDGGHLMFYAVEALRGRPVGPAAQDLAFRIGFAMVLMLTVFAAWNDINWLFG</sequence>
<evidence type="ECO:0000250" key="1"/>
<evidence type="ECO:0000255" key="2"/>
<evidence type="ECO:0000255" key="3">
    <source>
        <dbReference type="PROSITE-ProRule" id="PRU10095"/>
    </source>
</evidence>
<evidence type="ECO:0000305" key="4"/>